<name>RS19_ANAMM</name>
<sequence>MSRSIKKPPFCAPHVLRLANRAIASNRNAIINIHSRSSVILHKFIGLTFGVHNGRTYVPVKVTDNIVGRKFGEFSPTRRFLGHAGDKKVSRKG</sequence>
<gene>
    <name evidence="1" type="primary">rpsS</name>
    <name type="ordered locus">AM908</name>
</gene>
<feature type="chain" id="PRO_0000354283" description="Small ribosomal subunit protein uS19">
    <location>
        <begin position="1"/>
        <end position="93"/>
    </location>
</feature>
<keyword id="KW-0687">Ribonucleoprotein</keyword>
<keyword id="KW-0689">Ribosomal protein</keyword>
<keyword id="KW-0694">RNA-binding</keyword>
<keyword id="KW-0699">rRNA-binding</keyword>
<accession>Q5PA62</accession>
<evidence type="ECO:0000255" key="1">
    <source>
        <dbReference type="HAMAP-Rule" id="MF_00531"/>
    </source>
</evidence>
<evidence type="ECO:0000305" key="2"/>
<reference key="1">
    <citation type="journal article" date="2005" name="Proc. Natl. Acad. Sci. U.S.A.">
        <title>Complete genome sequencing of Anaplasma marginale reveals that the surface is skewed to two superfamilies of outer membrane proteins.</title>
        <authorList>
            <person name="Brayton K.A."/>
            <person name="Kappmeyer L.S."/>
            <person name="Herndon D.R."/>
            <person name="Dark M.J."/>
            <person name="Tibbals D.L."/>
            <person name="Palmer G.H."/>
            <person name="McGuire T.C."/>
            <person name="Knowles D.P. Jr."/>
        </authorList>
    </citation>
    <scope>NUCLEOTIDE SEQUENCE [LARGE SCALE GENOMIC DNA]</scope>
    <source>
        <strain>St. Maries</strain>
    </source>
</reference>
<protein>
    <recommendedName>
        <fullName evidence="1">Small ribosomal subunit protein uS19</fullName>
    </recommendedName>
    <alternativeName>
        <fullName evidence="2">30S ribosomal protein S19</fullName>
    </alternativeName>
</protein>
<proteinExistence type="inferred from homology"/>
<dbReference type="EMBL" id="CP000030">
    <property type="protein sequence ID" value="AAV86818.1"/>
    <property type="molecule type" value="Genomic_DNA"/>
</dbReference>
<dbReference type="RefSeq" id="WP_010265298.1">
    <property type="nucleotide sequence ID" value="NZ_AFMU01000034.1"/>
</dbReference>
<dbReference type="SMR" id="Q5PA62"/>
<dbReference type="GeneID" id="7397874"/>
<dbReference type="KEGG" id="ama:AM908"/>
<dbReference type="PATRIC" id="fig|320483.3.peg.785"/>
<dbReference type="HOGENOM" id="CLU_144911_0_1_5"/>
<dbReference type="GO" id="GO:0005737">
    <property type="term" value="C:cytoplasm"/>
    <property type="evidence" value="ECO:0007669"/>
    <property type="project" value="UniProtKB-ARBA"/>
</dbReference>
<dbReference type="GO" id="GO:0015935">
    <property type="term" value="C:small ribosomal subunit"/>
    <property type="evidence" value="ECO:0007669"/>
    <property type="project" value="InterPro"/>
</dbReference>
<dbReference type="GO" id="GO:0019843">
    <property type="term" value="F:rRNA binding"/>
    <property type="evidence" value="ECO:0007669"/>
    <property type="project" value="UniProtKB-UniRule"/>
</dbReference>
<dbReference type="GO" id="GO:0003735">
    <property type="term" value="F:structural constituent of ribosome"/>
    <property type="evidence" value="ECO:0007669"/>
    <property type="project" value="InterPro"/>
</dbReference>
<dbReference type="GO" id="GO:0000028">
    <property type="term" value="P:ribosomal small subunit assembly"/>
    <property type="evidence" value="ECO:0007669"/>
    <property type="project" value="TreeGrafter"/>
</dbReference>
<dbReference type="GO" id="GO:0006412">
    <property type="term" value="P:translation"/>
    <property type="evidence" value="ECO:0007669"/>
    <property type="project" value="UniProtKB-UniRule"/>
</dbReference>
<dbReference type="FunFam" id="3.30.860.10:FF:000001">
    <property type="entry name" value="30S ribosomal protein S19"/>
    <property type="match status" value="1"/>
</dbReference>
<dbReference type="Gene3D" id="3.30.860.10">
    <property type="entry name" value="30s Ribosomal Protein S19, Chain A"/>
    <property type="match status" value="1"/>
</dbReference>
<dbReference type="HAMAP" id="MF_00531">
    <property type="entry name" value="Ribosomal_uS19"/>
    <property type="match status" value="1"/>
</dbReference>
<dbReference type="InterPro" id="IPR002222">
    <property type="entry name" value="Ribosomal_uS19"/>
</dbReference>
<dbReference type="InterPro" id="IPR005732">
    <property type="entry name" value="Ribosomal_uS19_bac-type"/>
</dbReference>
<dbReference type="InterPro" id="IPR020934">
    <property type="entry name" value="Ribosomal_uS19_CS"/>
</dbReference>
<dbReference type="InterPro" id="IPR023575">
    <property type="entry name" value="Ribosomal_uS19_SF"/>
</dbReference>
<dbReference type="NCBIfam" id="TIGR01050">
    <property type="entry name" value="rpsS_bact"/>
    <property type="match status" value="1"/>
</dbReference>
<dbReference type="PANTHER" id="PTHR11880">
    <property type="entry name" value="RIBOSOMAL PROTEIN S19P FAMILY MEMBER"/>
    <property type="match status" value="1"/>
</dbReference>
<dbReference type="PANTHER" id="PTHR11880:SF8">
    <property type="entry name" value="SMALL RIBOSOMAL SUBUNIT PROTEIN US19M"/>
    <property type="match status" value="1"/>
</dbReference>
<dbReference type="Pfam" id="PF00203">
    <property type="entry name" value="Ribosomal_S19"/>
    <property type="match status" value="1"/>
</dbReference>
<dbReference type="PIRSF" id="PIRSF002144">
    <property type="entry name" value="Ribosomal_S19"/>
    <property type="match status" value="1"/>
</dbReference>
<dbReference type="PRINTS" id="PR00975">
    <property type="entry name" value="RIBOSOMALS19"/>
</dbReference>
<dbReference type="SUPFAM" id="SSF54570">
    <property type="entry name" value="Ribosomal protein S19"/>
    <property type="match status" value="1"/>
</dbReference>
<dbReference type="PROSITE" id="PS00323">
    <property type="entry name" value="RIBOSOMAL_S19"/>
    <property type="match status" value="1"/>
</dbReference>
<comment type="function">
    <text evidence="1">Protein S19 forms a complex with S13 that binds strongly to the 16S ribosomal RNA.</text>
</comment>
<comment type="similarity">
    <text evidence="1">Belongs to the universal ribosomal protein uS19 family.</text>
</comment>
<organism>
    <name type="scientific">Anaplasma marginale (strain St. Maries)</name>
    <dbReference type="NCBI Taxonomy" id="234826"/>
    <lineage>
        <taxon>Bacteria</taxon>
        <taxon>Pseudomonadati</taxon>
        <taxon>Pseudomonadota</taxon>
        <taxon>Alphaproteobacteria</taxon>
        <taxon>Rickettsiales</taxon>
        <taxon>Anaplasmataceae</taxon>
        <taxon>Anaplasma</taxon>
    </lineage>
</organism>